<sequence length="714" mass="81850">MAEEIITPVYCTGVSAQVQKQRAKELGLGRHENAIKYLGQDYEQLRARCLQSGTLFRDEAFPPVPQSLGFKDLGPNSSKTYGIKWKRPTELLSNPQFIVDGATRTDICQGALGDCWLLAAIASLTLNDTLLHRVVPHGQSFQNGYAGIFHFQLWQFGEWVDVVVDDLLPIKDGKLVFVHSAEGNEFWSALLEKAYAKVNGSYESLSGGSTSEGFEDFTGGVTEWYELRKAPSDLYQIILKALERGSLLGCSIDISSVLDMEAITFKKLVKGHAYSVTGAKQVNYRGQMVNLIRMRNPWGEVEWTGAWSDSSSEWNSVDPYEREQLRVKMEDGEFWMSFRDFMREFTRLEICNLTPDALKSRTIRKWNTTLYEGTWRRGSTAGGCRNYPATFWVNPQFKIRLDETDDPDDYGDRESGCSFVLALMQKHRRRERRFGRDMETIGFAVYEVPPELVGQPALHLKRDFFLANASRARSEQFINLREVSTRFRLPPGEYVVVPSTFEPNKEGDFVLRFFSEKSAGTAELDDQIQANLPDEQVLSEEEIDENFKALFRQLAGEDMEISVKELRTILNRIISKHKDLRTKGFSLESCRSMVNLMDRDGNGKLGLVEFNILWNRIRNYLSIFRKFDLDKSGSMSAYEMRMAIESAGFKLNKKLYELIITRYSEPDLAVDFDNFVCCLVRLETMFRFFKTLDTDLDGVVTFDLFKWLQLTMFA</sequence>
<evidence type="ECO:0000250" key="1"/>
<evidence type="ECO:0000250" key="2">
    <source>
        <dbReference type="UniProtKB" id="P07384"/>
    </source>
</evidence>
<evidence type="ECO:0000255" key="3">
    <source>
        <dbReference type="PROSITE-ProRule" id="PRU00239"/>
    </source>
</evidence>
<evidence type="ECO:0000255" key="4">
    <source>
        <dbReference type="PROSITE-ProRule" id="PRU00448"/>
    </source>
</evidence>
<evidence type="ECO:0000305" key="5"/>
<accession>Q9GLG2</accession>
<accession>Q4R593</accession>
<dbReference type="EC" id="3.4.22.52"/>
<dbReference type="EMBL" id="AF284440">
    <property type="protein sequence ID" value="AAG22770.1"/>
    <property type="molecule type" value="mRNA"/>
</dbReference>
<dbReference type="EMBL" id="AB169651">
    <property type="protein sequence ID" value="BAE01732.1"/>
    <property type="molecule type" value="mRNA"/>
</dbReference>
<dbReference type="RefSeq" id="NP_001272270.1">
    <property type="nucleotide sequence ID" value="NM_001285341.1"/>
</dbReference>
<dbReference type="RefSeq" id="XP_005577362.2">
    <property type="nucleotide sequence ID" value="XM_005577305.4"/>
</dbReference>
<dbReference type="RefSeq" id="XP_005577364.1">
    <property type="nucleotide sequence ID" value="XM_005577307.4"/>
</dbReference>
<dbReference type="RefSeq" id="XP_005577365.3">
    <property type="nucleotide sequence ID" value="XM_005577308.4"/>
</dbReference>
<dbReference type="RefSeq" id="XP_015289607.1">
    <property type="nucleotide sequence ID" value="XM_015434121.1"/>
</dbReference>
<dbReference type="RefSeq" id="XP_015289608.1">
    <property type="nucleotide sequence ID" value="XM_015434122.3"/>
</dbReference>
<dbReference type="RefSeq" id="XP_015289609.1">
    <property type="nucleotide sequence ID" value="XM_015434123.3"/>
</dbReference>
<dbReference type="RefSeq" id="XP_045228059.1">
    <property type="nucleotide sequence ID" value="XM_045372124.2"/>
</dbReference>
<dbReference type="RefSeq" id="XP_065385481.1">
    <property type="nucleotide sequence ID" value="XM_065529409.1"/>
</dbReference>
<dbReference type="SMR" id="Q9GLG2"/>
<dbReference type="STRING" id="9541.ENSMFAP00000003536"/>
<dbReference type="MEROPS" id="C02.001"/>
<dbReference type="GeneID" id="101867512"/>
<dbReference type="KEGG" id="mcf:101867512"/>
<dbReference type="CTD" id="823"/>
<dbReference type="VEuPathDB" id="HostDB:ENSMFAG00000001413"/>
<dbReference type="eggNOG" id="KOG0045">
    <property type="taxonomic scope" value="Eukaryota"/>
</dbReference>
<dbReference type="BRENDA" id="3.4.22.52">
    <property type="organism ID" value="1793"/>
</dbReference>
<dbReference type="Proteomes" id="UP000233100">
    <property type="component" value="Chromosome 14"/>
</dbReference>
<dbReference type="GO" id="GO:0005737">
    <property type="term" value="C:cytoplasm"/>
    <property type="evidence" value="ECO:0007669"/>
    <property type="project" value="UniProtKB-SubCell"/>
</dbReference>
<dbReference type="GO" id="GO:0005886">
    <property type="term" value="C:plasma membrane"/>
    <property type="evidence" value="ECO:0007669"/>
    <property type="project" value="UniProtKB-SubCell"/>
</dbReference>
<dbReference type="GO" id="GO:0005509">
    <property type="term" value="F:calcium ion binding"/>
    <property type="evidence" value="ECO:0007669"/>
    <property type="project" value="InterPro"/>
</dbReference>
<dbReference type="GO" id="GO:0004198">
    <property type="term" value="F:calcium-dependent cysteine-type endopeptidase activity"/>
    <property type="evidence" value="ECO:0000250"/>
    <property type="project" value="UniProtKB"/>
</dbReference>
<dbReference type="GO" id="GO:0008233">
    <property type="term" value="F:peptidase activity"/>
    <property type="evidence" value="ECO:0000250"/>
    <property type="project" value="UniProtKB"/>
</dbReference>
<dbReference type="GO" id="GO:0006508">
    <property type="term" value="P:proteolysis"/>
    <property type="evidence" value="ECO:0000250"/>
    <property type="project" value="UniProtKB"/>
</dbReference>
<dbReference type="CDD" id="cd00214">
    <property type="entry name" value="Calpain_III"/>
    <property type="match status" value="1"/>
</dbReference>
<dbReference type="CDD" id="cd00044">
    <property type="entry name" value="CysPc"/>
    <property type="match status" value="1"/>
</dbReference>
<dbReference type="CDD" id="cd16198">
    <property type="entry name" value="EFh_PEF_CAPN1"/>
    <property type="match status" value="1"/>
</dbReference>
<dbReference type="FunFam" id="1.10.238.10:FF:000124">
    <property type="entry name" value="Calpain-1 catalytic subunit"/>
    <property type="match status" value="1"/>
</dbReference>
<dbReference type="FunFam" id="2.60.120.380:FF:000001">
    <property type="entry name" value="Calpain-1 catalytic subunit"/>
    <property type="match status" value="1"/>
</dbReference>
<dbReference type="FunFam" id="3.90.70.10:FF:000001">
    <property type="entry name" value="Calpain-1 catalytic subunit"/>
    <property type="match status" value="1"/>
</dbReference>
<dbReference type="Gene3D" id="2.60.120.380">
    <property type="match status" value="1"/>
</dbReference>
<dbReference type="Gene3D" id="3.90.70.10">
    <property type="entry name" value="Cysteine proteinases"/>
    <property type="match status" value="1"/>
</dbReference>
<dbReference type="Gene3D" id="1.10.238.10">
    <property type="entry name" value="EF-hand"/>
    <property type="match status" value="1"/>
</dbReference>
<dbReference type="InterPro" id="IPR033883">
    <property type="entry name" value="C2_III"/>
</dbReference>
<dbReference type="InterPro" id="IPR022684">
    <property type="entry name" value="Calpain_cysteine_protease"/>
</dbReference>
<dbReference type="InterPro" id="IPR022682">
    <property type="entry name" value="Calpain_domain_III"/>
</dbReference>
<dbReference type="InterPro" id="IPR022683">
    <property type="entry name" value="Calpain_III"/>
</dbReference>
<dbReference type="InterPro" id="IPR036213">
    <property type="entry name" value="Calpain_III_sf"/>
</dbReference>
<dbReference type="InterPro" id="IPR011992">
    <property type="entry name" value="EF-hand-dom_pair"/>
</dbReference>
<dbReference type="InterPro" id="IPR018247">
    <property type="entry name" value="EF_Hand_1_Ca_BS"/>
</dbReference>
<dbReference type="InterPro" id="IPR002048">
    <property type="entry name" value="EF_hand_dom"/>
</dbReference>
<dbReference type="InterPro" id="IPR038765">
    <property type="entry name" value="Papain-like_cys_pep_sf"/>
</dbReference>
<dbReference type="InterPro" id="IPR000169">
    <property type="entry name" value="Pept_cys_AS"/>
</dbReference>
<dbReference type="InterPro" id="IPR001300">
    <property type="entry name" value="Peptidase_C2_calpain_cat"/>
</dbReference>
<dbReference type="PANTHER" id="PTHR10183">
    <property type="entry name" value="CALPAIN"/>
    <property type="match status" value="1"/>
</dbReference>
<dbReference type="PANTHER" id="PTHR10183:SF284">
    <property type="entry name" value="CALPAIN-1 CATALYTIC SUBUNIT"/>
    <property type="match status" value="1"/>
</dbReference>
<dbReference type="Pfam" id="PF01067">
    <property type="entry name" value="Calpain_III"/>
    <property type="match status" value="1"/>
</dbReference>
<dbReference type="Pfam" id="PF13833">
    <property type="entry name" value="EF-hand_8"/>
    <property type="match status" value="1"/>
</dbReference>
<dbReference type="Pfam" id="PF00648">
    <property type="entry name" value="Peptidase_C2"/>
    <property type="match status" value="1"/>
</dbReference>
<dbReference type="PRINTS" id="PR00704">
    <property type="entry name" value="CALPAIN"/>
</dbReference>
<dbReference type="SMART" id="SM00720">
    <property type="entry name" value="calpain_III"/>
    <property type="match status" value="1"/>
</dbReference>
<dbReference type="SMART" id="SM00230">
    <property type="entry name" value="CysPc"/>
    <property type="match status" value="1"/>
</dbReference>
<dbReference type="SUPFAM" id="SSF49758">
    <property type="entry name" value="Calpain large subunit, middle domain (domain III)"/>
    <property type="match status" value="1"/>
</dbReference>
<dbReference type="SUPFAM" id="SSF54001">
    <property type="entry name" value="Cysteine proteinases"/>
    <property type="match status" value="1"/>
</dbReference>
<dbReference type="SUPFAM" id="SSF47473">
    <property type="entry name" value="EF-hand"/>
    <property type="match status" value="1"/>
</dbReference>
<dbReference type="PROSITE" id="PS50203">
    <property type="entry name" value="CALPAIN_CAT"/>
    <property type="match status" value="1"/>
</dbReference>
<dbReference type="PROSITE" id="PS00018">
    <property type="entry name" value="EF_HAND_1"/>
    <property type="match status" value="2"/>
</dbReference>
<dbReference type="PROSITE" id="PS50222">
    <property type="entry name" value="EF_HAND_2"/>
    <property type="match status" value="4"/>
</dbReference>
<dbReference type="PROSITE" id="PS00139">
    <property type="entry name" value="THIOL_PROTEASE_CYS"/>
    <property type="match status" value="1"/>
</dbReference>
<comment type="function">
    <text evidence="2">Calcium-regulated non-lysosomal thiol-protease which catalyze limited proteolysis of substrates involved in cytoskeletal remodeling and signal transduction. Proteolytically cleaves CTBP1. Cleaves and activates caspase-7 (CASP7).</text>
</comment>
<comment type="catalytic activity">
    <reaction>
        <text>Broad endopeptidase specificity.</text>
        <dbReference type="EC" id="3.4.22.52"/>
    </reaction>
</comment>
<comment type="cofactor">
    <cofactor evidence="1">
        <name>Ca(2+)</name>
        <dbReference type="ChEBI" id="CHEBI:29108"/>
    </cofactor>
    <text evidence="1">Binds 4 Ca(2+) ions.</text>
</comment>
<comment type="activity regulation">
    <text evidence="1">Activated by micromolar concentrations of calcium and inhibited by calpastatin.</text>
</comment>
<comment type="subunit">
    <text>Forms a heterodimer with a small (regulatory) subunit (CAPNS1).</text>
</comment>
<comment type="subcellular location">
    <subcellularLocation>
        <location evidence="1">Cytoplasm</location>
    </subcellularLocation>
    <subcellularLocation>
        <location evidence="1">Cell membrane</location>
    </subcellularLocation>
    <text evidence="1">Translocates to the plasma membrane upon Ca(2+) binding.</text>
</comment>
<comment type="tissue specificity">
    <text>Ubiquitous.</text>
</comment>
<comment type="PTM">
    <text evidence="1">Undergoes calcium-induced successive autoproteolytic cleavages that generate a membrane-bound 78 kDa active form and an intracellular 75 kDa active form. Calpastatin reduces with high efficiency the transition from 78 kDa to 75 kDa calpain forms (By similarity).</text>
</comment>
<comment type="similarity">
    <text evidence="5">Belongs to the peptidase C2 family.</text>
</comment>
<proteinExistence type="evidence at transcript level"/>
<protein>
    <recommendedName>
        <fullName>Calpain-1 catalytic subunit</fullName>
        <ecNumber>3.4.22.52</ecNumber>
    </recommendedName>
    <alternativeName>
        <fullName>Calcium-activated neutral proteinase 1</fullName>
        <shortName>CANP 1</shortName>
    </alternativeName>
    <alternativeName>
        <fullName>Calpain mu-type</fullName>
    </alternativeName>
    <alternativeName>
        <fullName>Calpain-1 large subunit</fullName>
    </alternativeName>
    <alternativeName>
        <fullName>Micromolar-calpain</fullName>
        <shortName>muCANP</shortName>
    </alternativeName>
</protein>
<feature type="chain" id="PRO_0000207695" description="Calpain-1 catalytic subunit">
    <location>
        <begin position="1"/>
        <end position="714"/>
    </location>
</feature>
<feature type="domain" description="Calpain catalytic" evidence="3">
    <location>
        <begin position="55"/>
        <end position="354"/>
    </location>
</feature>
<feature type="domain" description="EF-hand 1" evidence="4">
    <location>
        <begin position="541"/>
        <end position="576"/>
    </location>
</feature>
<feature type="domain" description="EF-hand 2" evidence="4">
    <location>
        <begin position="585"/>
        <end position="618"/>
    </location>
</feature>
<feature type="domain" description="EF-hand 3" evidence="4">
    <location>
        <begin position="615"/>
        <end position="650"/>
    </location>
</feature>
<feature type="domain" description="EF-hand 4" evidence="4">
    <location>
        <begin position="680"/>
        <end position="714"/>
    </location>
</feature>
<feature type="region of interest" description="Domain III">
    <location>
        <begin position="355"/>
        <end position="526"/>
    </location>
</feature>
<feature type="region of interest" description="Linker">
    <location>
        <begin position="527"/>
        <end position="542"/>
    </location>
</feature>
<feature type="region of interest" description="Domain IV">
    <location>
        <begin position="543"/>
        <end position="713"/>
    </location>
</feature>
<feature type="active site" evidence="1">
    <location>
        <position position="115"/>
    </location>
</feature>
<feature type="active site" evidence="1">
    <location>
        <position position="272"/>
    </location>
</feature>
<feature type="active site" evidence="1">
    <location>
        <position position="296"/>
    </location>
</feature>
<feature type="binding site" evidence="5">
    <location>
        <position position="109"/>
    </location>
    <ligand>
        <name>Ca(2+)</name>
        <dbReference type="ChEBI" id="CHEBI:29108"/>
        <label>1</label>
    </ligand>
</feature>
<feature type="binding site" evidence="5">
    <location>
        <position position="114"/>
    </location>
    <ligand>
        <name>Ca(2+)</name>
        <dbReference type="ChEBI" id="CHEBI:29108"/>
        <label>1</label>
    </ligand>
</feature>
<feature type="binding site" evidence="5">
    <location>
        <position position="316"/>
    </location>
    <ligand>
        <name>Ca(2+)</name>
        <dbReference type="ChEBI" id="CHEBI:29108"/>
        <label>2</label>
    </ligand>
</feature>
<feature type="binding site" evidence="5">
    <location>
        <position position="318"/>
    </location>
    <ligand>
        <name>Ca(2+)</name>
        <dbReference type="ChEBI" id="CHEBI:29108"/>
        <label>2</label>
    </ligand>
</feature>
<feature type="binding site" evidence="5">
    <location>
        <position position="323"/>
    </location>
    <ligand>
        <name>Ca(2+)</name>
        <dbReference type="ChEBI" id="CHEBI:29108"/>
        <label>2</label>
    </ligand>
</feature>
<feature type="binding site" evidence="4">
    <location>
        <position position="598"/>
    </location>
    <ligand>
        <name>Ca(2+)</name>
        <dbReference type="ChEBI" id="CHEBI:29108"/>
        <label>3</label>
    </ligand>
</feature>
<feature type="binding site" evidence="4">
    <location>
        <position position="600"/>
    </location>
    <ligand>
        <name>Ca(2+)</name>
        <dbReference type="ChEBI" id="CHEBI:29108"/>
        <label>3</label>
    </ligand>
</feature>
<feature type="binding site" evidence="4">
    <location>
        <position position="602"/>
    </location>
    <ligand>
        <name>Ca(2+)</name>
        <dbReference type="ChEBI" id="CHEBI:29108"/>
        <label>3</label>
    </ligand>
</feature>
<feature type="binding site" evidence="4">
    <location>
        <position position="604"/>
    </location>
    <ligand>
        <name>Ca(2+)</name>
        <dbReference type="ChEBI" id="CHEBI:29108"/>
        <label>3</label>
    </ligand>
</feature>
<feature type="binding site" evidence="4">
    <location>
        <position position="609"/>
    </location>
    <ligand>
        <name>Ca(2+)</name>
        <dbReference type="ChEBI" id="CHEBI:29108"/>
        <label>3</label>
    </ligand>
</feature>
<feature type="binding site" evidence="4">
    <location>
        <position position="628"/>
    </location>
    <ligand>
        <name>Ca(2+)</name>
        <dbReference type="ChEBI" id="CHEBI:29108"/>
        <label>4</label>
    </ligand>
</feature>
<feature type="binding site" evidence="4">
    <location>
        <position position="630"/>
    </location>
    <ligand>
        <name>Ca(2+)</name>
        <dbReference type="ChEBI" id="CHEBI:29108"/>
        <label>4</label>
    </ligand>
</feature>
<feature type="binding site" evidence="4">
    <location>
        <position position="632"/>
    </location>
    <ligand>
        <name>Ca(2+)</name>
        <dbReference type="ChEBI" id="CHEBI:29108"/>
        <label>4</label>
    </ligand>
</feature>
<feature type="binding site" evidence="4">
    <location>
        <position position="634"/>
    </location>
    <ligand>
        <name>Ca(2+)</name>
        <dbReference type="ChEBI" id="CHEBI:29108"/>
        <label>4</label>
    </ligand>
</feature>
<feature type="binding site" evidence="4">
    <location>
        <position position="639"/>
    </location>
    <ligand>
        <name>Ca(2+)</name>
        <dbReference type="ChEBI" id="CHEBI:29108"/>
        <label>4</label>
    </ligand>
</feature>
<feature type="site" description="Cleavage; for 78 kDa form" evidence="1">
    <location>
        <begin position="15"/>
        <end position="16"/>
    </location>
</feature>
<feature type="site" description="Cleavage; for 75 kDa form" evidence="1">
    <location>
        <begin position="27"/>
        <end position="28"/>
    </location>
</feature>
<feature type="modified residue" description="Phosphothreonine" evidence="2">
    <location>
        <position position="354"/>
    </location>
</feature>
<gene>
    <name type="primary">CAPN1</name>
    <name type="synonym">CANPL1</name>
    <name type="ORF">QccE-12457</name>
</gene>
<reference key="1">
    <citation type="journal article" date="2001" name="Biochim. Biophys. Acta">
        <title>Different expression patterns for ubiquitous calpains and Capn3 splice variants in monkey ocular tissues.</title>
        <authorList>
            <person name="Nakajima T."/>
            <person name="Fukiage C."/>
            <person name="Azuma M."/>
            <person name="Ma H."/>
            <person name="Shearer T.R."/>
        </authorList>
    </citation>
    <scope>NUCLEOTIDE SEQUENCE [MRNA]</scope>
    <source>
        <tissue>Retina</tissue>
    </source>
</reference>
<reference key="2">
    <citation type="submission" date="2005-06" db="EMBL/GenBank/DDBJ databases">
        <title>DNA sequences of macaque genes expressed in brain or testis and its evolutionary implications.</title>
        <authorList>
            <consortium name="International consortium for macaque cDNA sequencing and analysis"/>
        </authorList>
    </citation>
    <scope>NUCLEOTIDE SEQUENCE [LARGE SCALE MRNA]</scope>
    <source>
        <tissue>Brain cortex</tissue>
    </source>
</reference>
<name>CAN1_MACFA</name>
<organism>
    <name type="scientific">Macaca fascicularis</name>
    <name type="common">Crab-eating macaque</name>
    <name type="synonym">Cynomolgus monkey</name>
    <dbReference type="NCBI Taxonomy" id="9541"/>
    <lineage>
        <taxon>Eukaryota</taxon>
        <taxon>Metazoa</taxon>
        <taxon>Chordata</taxon>
        <taxon>Craniata</taxon>
        <taxon>Vertebrata</taxon>
        <taxon>Euteleostomi</taxon>
        <taxon>Mammalia</taxon>
        <taxon>Eutheria</taxon>
        <taxon>Euarchontoglires</taxon>
        <taxon>Primates</taxon>
        <taxon>Haplorrhini</taxon>
        <taxon>Catarrhini</taxon>
        <taxon>Cercopithecidae</taxon>
        <taxon>Cercopithecinae</taxon>
        <taxon>Macaca</taxon>
    </lineage>
</organism>
<keyword id="KW-0068">Autocatalytic cleavage</keyword>
<keyword id="KW-0106">Calcium</keyword>
<keyword id="KW-1003">Cell membrane</keyword>
<keyword id="KW-0963">Cytoplasm</keyword>
<keyword id="KW-0378">Hydrolase</keyword>
<keyword id="KW-0472">Membrane</keyword>
<keyword id="KW-0479">Metal-binding</keyword>
<keyword id="KW-0597">Phosphoprotein</keyword>
<keyword id="KW-0645">Protease</keyword>
<keyword id="KW-1185">Reference proteome</keyword>
<keyword id="KW-0677">Repeat</keyword>
<keyword id="KW-0788">Thiol protease</keyword>